<organism>
    <name type="scientific">Anaplasma marginale (strain Florida)</name>
    <dbReference type="NCBI Taxonomy" id="320483"/>
    <lineage>
        <taxon>Bacteria</taxon>
        <taxon>Pseudomonadati</taxon>
        <taxon>Pseudomonadota</taxon>
        <taxon>Alphaproteobacteria</taxon>
        <taxon>Rickettsiales</taxon>
        <taxon>Anaplasmataceae</taxon>
        <taxon>Anaplasma</taxon>
    </lineage>
</organism>
<evidence type="ECO:0000255" key="1">
    <source>
        <dbReference type="HAMAP-Rule" id="MF_00156"/>
    </source>
</evidence>
<accession>B9KHN0</accession>
<feature type="chain" id="PRO_1000123366" description="3-methyl-2-oxobutanoate hydroxymethyltransferase">
    <location>
        <begin position="1"/>
        <end position="277"/>
    </location>
</feature>
<feature type="active site" description="Proton acceptor" evidence="1">
    <location>
        <position position="179"/>
    </location>
</feature>
<feature type="binding site" evidence="1">
    <location>
        <begin position="42"/>
        <end position="43"/>
    </location>
    <ligand>
        <name>3-methyl-2-oxobutanoate</name>
        <dbReference type="ChEBI" id="CHEBI:11851"/>
    </ligand>
</feature>
<feature type="binding site" evidence="1">
    <location>
        <position position="42"/>
    </location>
    <ligand>
        <name>Mg(2+)</name>
        <dbReference type="ChEBI" id="CHEBI:18420"/>
    </ligand>
</feature>
<feature type="binding site" evidence="1">
    <location>
        <position position="81"/>
    </location>
    <ligand>
        <name>3-methyl-2-oxobutanoate</name>
        <dbReference type="ChEBI" id="CHEBI:11851"/>
    </ligand>
</feature>
<feature type="binding site" evidence="1">
    <location>
        <position position="81"/>
    </location>
    <ligand>
        <name>Mg(2+)</name>
        <dbReference type="ChEBI" id="CHEBI:18420"/>
    </ligand>
</feature>
<feature type="binding site" evidence="1">
    <location>
        <position position="110"/>
    </location>
    <ligand>
        <name>3-methyl-2-oxobutanoate</name>
        <dbReference type="ChEBI" id="CHEBI:11851"/>
    </ligand>
</feature>
<feature type="binding site" evidence="1">
    <location>
        <position position="112"/>
    </location>
    <ligand>
        <name>Mg(2+)</name>
        <dbReference type="ChEBI" id="CHEBI:18420"/>
    </ligand>
</feature>
<proteinExistence type="inferred from homology"/>
<keyword id="KW-0963">Cytoplasm</keyword>
<keyword id="KW-0460">Magnesium</keyword>
<keyword id="KW-0479">Metal-binding</keyword>
<keyword id="KW-0566">Pantothenate biosynthesis</keyword>
<keyword id="KW-1185">Reference proteome</keyword>
<keyword id="KW-0808">Transferase</keyword>
<dbReference type="EC" id="2.1.2.11" evidence="1"/>
<dbReference type="EMBL" id="CP001079">
    <property type="protein sequence ID" value="ACM48992.1"/>
    <property type="molecule type" value="Genomic_DNA"/>
</dbReference>
<dbReference type="RefSeq" id="WP_012658825.1">
    <property type="nucleotide sequence ID" value="NZ_AFMS01000025.1"/>
</dbReference>
<dbReference type="SMR" id="B9KHN0"/>
<dbReference type="STRING" id="320483.AMF_104"/>
<dbReference type="GeneID" id="7398820"/>
<dbReference type="KEGG" id="amf:AMF_104"/>
<dbReference type="PATRIC" id="fig|320483.3.peg.122"/>
<dbReference type="eggNOG" id="COG0413">
    <property type="taxonomic scope" value="Bacteria"/>
</dbReference>
<dbReference type="HOGENOM" id="CLU_036645_1_0_5"/>
<dbReference type="UniPathway" id="UPA00028">
    <property type="reaction ID" value="UER00003"/>
</dbReference>
<dbReference type="Proteomes" id="UP000007307">
    <property type="component" value="Chromosome"/>
</dbReference>
<dbReference type="GO" id="GO:0005737">
    <property type="term" value="C:cytoplasm"/>
    <property type="evidence" value="ECO:0007669"/>
    <property type="project" value="UniProtKB-SubCell"/>
</dbReference>
<dbReference type="GO" id="GO:0003864">
    <property type="term" value="F:3-methyl-2-oxobutanoate hydroxymethyltransferase activity"/>
    <property type="evidence" value="ECO:0007669"/>
    <property type="project" value="UniProtKB-UniRule"/>
</dbReference>
<dbReference type="GO" id="GO:0000287">
    <property type="term" value="F:magnesium ion binding"/>
    <property type="evidence" value="ECO:0007669"/>
    <property type="project" value="TreeGrafter"/>
</dbReference>
<dbReference type="GO" id="GO:0015940">
    <property type="term" value="P:pantothenate biosynthetic process"/>
    <property type="evidence" value="ECO:0007669"/>
    <property type="project" value="UniProtKB-UniRule"/>
</dbReference>
<dbReference type="CDD" id="cd06557">
    <property type="entry name" value="KPHMT-like"/>
    <property type="match status" value="1"/>
</dbReference>
<dbReference type="FunFam" id="3.20.20.60:FF:000003">
    <property type="entry name" value="3-methyl-2-oxobutanoate hydroxymethyltransferase"/>
    <property type="match status" value="1"/>
</dbReference>
<dbReference type="Gene3D" id="3.20.20.60">
    <property type="entry name" value="Phosphoenolpyruvate-binding domains"/>
    <property type="match status" value="1"/>
</dbReference>
<dbReference type="HAMAP" id="MF_00156">
    <property type="entry name" value="PanB"/>
    <property type="match status" value="1"/>
</dbReference>
<dbReference type="InterPro" id="IPR003700">
    <property type="entry name" value="Pantoate_hydroxy_MeTrfase"/>
</dbReference>
<dbReference type="InterPro" id="IPR015813">
    <property type="entry name" value="Pyrv/PenolPyrv_kinase-like_dom"/>
</dbReference>
<dbReference type="InterPro" id="IPR040442">
    <property type="entry name" value="Pyrv_kinase-like_dom_sf"/>
</dbReference>
<dbReference type="NCBIfam" id="TIGR00222">
    <property type="entry name" value="panB"/>
    <property type="match status" value="1"/>
</dbReference>
<dbReference type="NCBIfam" id="NF001452">
    <property type="entry name" value="PRK00311.1"/>
    <property type="match status" value="1"/>
</dbReference>
<dbReference type="PANTHER" id="PTHR20881">
    <property type="entry name" value="3-METHYL-2-OXOBUTANOATE HYDROXYMETHYLTRANSFERASE"/>
    <property type="match status" value="1"/>
</dbReference>
<dbReference type="PANTHER" id="PTHR20881:SF0">
    <property type="entry name" value="3-METHYL-2-OXOBUTANOATE HYDROXYMETHYLTRANSFERASE"/>
    <property type="match status" value="1"/>
</dbReference>
<dbReference type="Pfam" id="PF02548">
    <property type="entry name" value="Pantoate_transf"/>
    <property type="match status" value="1"/>
</dbReference>
<dbReference type="PIRSF" id="PIRSF000388">
    <property type="entry name" value="Pantoate_hydroxy_MeTrfase"/>
    <property type="match status" value="1"/>
</dbReference>
<dbReference type="SUPFAM" id="SSF51621">
    <property type="entry name" value="Phosphoenolpyruvate/pyruvate domain"/>
    <property type="match status" value="1"/>
</dbReference>
<reference key="1">
    <citation type="journal article" date="2009" name="BMC Genomics">
        <title>Conservation in the face of diversity: multistrain analysis of an intracellular bacterium.</title>
        <authorList>
            <person name="Dark M.J."/>
            <person name="Herndon D.R."/>
            <person name="Kappmeyer L.S."/>
            <person name="Gonzales M.P."/>
            <person name="Nordeen E."/>
            <person name="Palmer G.H."/>
            <person name="Knowles D.P. Jr."/>
            <person name="Brayton K.A."/>
        </authorList>
    </citation>
    <scope>NUCLEOTIDE SEQUENCE [LARGE SCALE GENOMIC DNA]</scope>
    <source>
        <strain>Florida</strain>
    </source>
</reference>
<sequence>MLLNILDIQAKKGLEKIACLTAYTFPMARILDEHCDLILVGDSVGQTVYGMESTLSVTLDIMIAHGKAVVKARSKALVVVDMPFASYYTPELAYKNASRILSETGCDAVKLEGGVCVAEEIAFLVARGIPVMGHVGLMPQHFNQLGGYKCQGKTDSSRQHIKEDAKAVCEAGAFCVVLECISPSLAAELTQELPVPTIGIGASNACDGQILVVDDMLGQSSRYPKFVKRFADLEHTIKDAVVGYVRAVKCSEFPGDEHCYSDGPHLRVFRAHPHHAQ</sequence>
<name>PANB_ANAMF</name>
<comment type="function">
    <text evidence="1">Catalyzes the reversible reaction in which hydroxymethyl group from 5,10-methylenetetrahydrofolate is transferred onto alpha-ketoisovalerate to form ketopantoate.</text>
</comment>
<comment type="catalytic activity">
    <reaction evidence="1">
        <text>3-methyl-2-oxobutanoate + (6R)-5,10-methylene-5,6,7,8-tetrahydrofolate + H2O = 2-dehydropantoate + (6S)-5,6,7,8-tetrahydrofolate</text>
        <dbReference type="Rhea" id="RHEA:11824"/>
        <dbReference type="ChEBI" id="CHEBI:11561"/>
        <dbReference type="ChEBI" id="CHEBI:11851"/>
        <dbReference type="ChEBI" id="CHEBI:15377"/>
        <dbReference type="ChEBI" id="CHEBI:15636"/>
        <dbReference type="ChEBI" id="CHEBI:57453"/>
        <dbReference type="EC" id="2.1.2.11"/>
    </reaction>
</comment>
<comment type="cofactor">
    <cofactor evidence="1">
        <name>Mg(2+)</name>
        <dbReference type="ChEBI" id="CHEBI:18420"/>
    </cofactor>
    <text evidence="1">Binds 1 Mg(2+) ion per subunit.</text>
</comment>
<comment type="pathway">
    <text evidence="1">Cofactor biosynthesis; (R)-pantothenate biosynthesis; (R)-pantoate from 3-methyl-2-oxobutanoate: step 1/2.</text>
</comment>
<comment type="subunit">
    <text evidence="1">Homodecamer; pentamer of dimers.</text>
</comment>
<comment type="subcellular location">
    <subcellularLocation>
        <location evidence="1">Cytoplasm</location>
    </subcellularLocation>
</comment>
<comment type="similarity">
    <text evidence="1">Belongs to the PanB family.</text>
</comment>
<protein>
    <recommendedName>
        <fullName evidence="1">3-methyl-2-oxobutanoate hydroxymethyltransferase</fullName>
        <ecNumber evidence="1">2.1.2.11</ecNumber>
    </recommendedName>
    <alternativeName>
        <fullName evidence="1">Ketopantoate hydroxymethyltransferase</fullName>
        <shortName evidence="1">KPHMT</shortName>
    </alternativeName>
</protein>
<gene>
    <name evidence="1" type="primary">panB</name>
    <name type="ordered locus">AMF_104</name>
</gene>